<sequence>MLKREMNIADYDAELWQAMEQEKVRQEEHIELIASENYTSPRVMQAQGSQLTNKYAEGYPGKRYYGGCEYVDIVEQLAIDRAKELFGADYANVQPHSGSQANFAVYTALLEPGDTVLGMNLAHGGHLTHGSPVNFSGKLYNIVPYGIDATGHIDYADLEKQAKEHKPKMIIGGFSAYSGVVDWAKMREIADSIGAYLFVDMAHVAGLVAAGVYPNPVPHAHVVTTTTHKTLAGPRGGLILAKGGSEELYKKLNSAVFPGGQGGPLMHVIAGKAVALKEAMEPEFKTYQQQVAKNAKAMVEVFLERGYKVVSGGTDNHLFLVDLVDKNLTGKEADAALGRANITVNKNSVPNDPKSPFVTSGIRVGTPAITRRGFKEAEAKELAGWMCDVLDSINDEAVIERIKGKVLDICARYPVYA</sequence>
<evidence type="ECO:0000255" key="1">
    <source>
        <dbReference type="HAMAP-Rule" id="MF_00051"/>
    </source>
</evidence>
<organism>
    <name type="scientific">Escherichia coli O9:H4 (strain HS)</name>
    <dbReference type="NCBI Taxonomy" id="331112"/>
    <lineage>
        <taxon>Bacteria</taxon>
        <taxon>Pseudomonadati</taxon>
        <taxon>Pseudomonadota</taxon>
        <taxon>Gammaproteobacteria</taxon>
        <taxon>Enterobacterales</taxon>
        <taxon>Enterobacteriaceae</taxon>
        <taxon>Escherichia</taxon>
    </lineage>
</organism>
<accession>A8A359</accession>
<reference key="1">
    <citation type="journal article" date="2008" name="J. Bacteriol.">
        <title>The pangenome structure of Escherichia coli: comparative genomic analysis of E. coli commensal and pathogenic isolates.</title>
        <authorList>
            <person name="Rasko D.A."/>
            <person name="Rosovitz M.J."/>
            <person name="Myers G.S.A."/>
            <person name="Mongodin E.F."/>
            <person name="Fricke W.F."/>
            <person name="Gajer P."/>
            <person name="Crabtree J."/>
            <person name="Sebaihia M."/>
            <person name="Thomson N.R."/>
            <person name="Chaudhuri R."/>
            <person name="Henderson I.R."/>
            <person name="Sperandio V."/>
            <person name="Ravel J."/>
        </authorList>
    </citation>
    <scope>NUCLEOTIDE SEQUENCE [LARGE SCALE GENOMIC DNA]</scope>
    <source>
        <strain>HS</strain>
    </source>
</reference>
<dbReference type="EC" id="2.1.2.1" evidence="1"/>
<dbReference type="EMBL" id="CP000802">
    <property type="protein sequence ID" value="ABV06963.1"/>
    <property type="molecule type" value="Genomic_DNA"/>
</dbReference>
<dbReference type="RefSeq" id="WP_000919159.1">
    <property type="nucleotide sequence ID" value="NC_009800.1"/>
</dbReference>
<dbReference type="SMR" id="A8A359"/>
<dbReference type="GeneID" id="89517346"/>
<dbReference type="KEGG" id="ecx:EcHS_A2704"/>
<dbReference type="HOGENOM" id="CLU_022477_2_1_6"/>
<dbReference type="UniPathway" id="UPA00193"/>
<dbReference type="UniPathway" id="UPA00288">
    <property type="reaction ID" value="UER01023"/>
</dbReference>
<dbReference type="GO" id="GO:0005829">
    <property type="term" value="C:cytosol"/>
    <property type="evidence" value="ECO:0007669"/>
    <property type="project" value="TreeGrafter"/>
</dbReference>
<dbReference type="GO" id="GO:0004372">
    <property type="term" value="F:glycine hydroxymethyltransferase activity"/>
    <property type="evidence" value="ECO:0007669"/>
    <property type="project" value="UniProtKB-UniRule"/>
</dbReference>
<dbReference type="GO" id="GO:0030170">
    <property type="term" value="F:pyridoxal phosphate binding"/>
    <property type="evidence" value="ECO:0007669"/>
    <property type="project" value="UniProtKB-UniRule"/>
</dbReference>
<dbReference type="GO" id="GO:0019264">
    <property type="term" value="P:glycine biosynthetic process from serine"/>
    <property type="evidence" value="ECO:0007669"/>
    <property type="project" value="UniProtKB-UniRule"/>
</dbReference>
<dbReference type="GO" id="GO:0035999">
    <property type="term" value="P:tetrahydrofolate interconversion"/>
    <property type="evidence" value="ECO:0007669"/>
    <property type="project" value="UniProtKB-UniRule"/>
</dbReference>
<dbReference type="CDD" id="cd00378">
    <property type="entry name" value="SHMT"/>
    <property type="match status" value="1"/>
</dbReference>
<dbReference type="FunFam" id="3.40.640.10:FF:000001">
    <property type="entry name" value="Serine hydroxymethyltransferase"/>
    <property type="match status" value="1"/>
</dbReference>
<dbReference type="FunFam" id="3.90.1150.10:FF:000003">
    <property type="entry name" value="Serine hydroxymethyltransferase"/>
    <property type="match status" value="1"/>
</dbReference>
<dbReference type="Gene3D" id="3.90.1150.10">
    <property type="entry name" value="Aspartate Aminotransferase, domain 1"/>
    <property type="match status" value="1"/>
</dbReference>
<dbReference type="Gene3D" id="3.40.640.10">
    <property type="entry name" value="Type I PLP-dependent aspartate aminotransferase-like (Major domain)"/>
    <property type="match status" value="1"/>
</dbReference>
<dbReference type="HAMAP" id="MF_00051">
    <property type="entry name" value="SHMT"/>
    <property type="match status" value="1"/>
</dbReference>
<dbReference type="InterPro" id="IPR015424">
    <property type="entry name" value="PyrdxlP-dep_Trfase"/>
</dbReference>
<dbReference type="InterPro" id="IPR015421">
    <property type="entry name" value="PyrdxlP-dep_Trfase_major"/>
</dbReference>
<dbReference type="InterPro" id="IPR015422">
    <property type="entry name" value="PyrdxlP-dep_Trfase_small"/>
</dbReference>
<dbReference type="InterPro" id="IPR001085">
    <property type="entry name" value="Ser_HO-MeTrfase"/>
</dbReference>
<dbReference type="InterPro" id="IPR049943">
    <property type="entry name" value="Ser_HO-MeTrfase-like"/>
</dbReference>
<dbReference type="InterPro" id="IPR019798">
    <property type="entry name" value="Ser_HO-MeTrfase_PLP_BS"/>
</dbReference>
<dbReference type="InterPro" id="IPR039429">
    <property type="entry name" value="SHMT-like_dom"/>
</dbReference>
<dbReference type="NCBIfam" id="NF000586">
    <property type="entry name" value="PRK00011.1"/>
    <property type="match status" value="1"/>
</dbReference>
<dbReference type="PANTHER" id="PTHR11680">
    <property type="entry name" value="SERINE HYDROXYMETHYLTRANSFERASE"/>
    <property type="match status" value="1"/>
</dbReference>
<dbReference type="PANTHER" id="PTHR11680:SF50">
    <property type="entry name" value="SERINE HYDROXYMETHYLTRANSFERASE"/>
    <property type="match status" value="1"/>
</dbReference>
<dbReference type="Pfam" id="PF00464">
    <property type="entry name" value="SHMT"/>
    <property type="match status" value="1"/>
</dbReference>
<dbReference type="PIRSF" id="PIRSF000412">
    <property type="entry name" value="SHMT"/>
    <property type="match status" value="1"/>
</dbReference>
<dbReference type="SUPFAM" id="SSF53383">
    <property type="entry name" value="PLP-dependent transferases"/>
    <property type="match status" value="1"/>
</dbReference>
<dbReference type="PROSITE" id="PS00096">
    <property type="entry name" value="SHMT"/>
    <property type="match status" value="1"/>
</dbReference>
<name>GLYA_ECOHS</name>
<comment type="function">
    <text evidence="1">Catalyzes the reversible interconversion of serine and glycine with tetrahydrofolate (THF) serving as the one-carbon carrier. This reaction serves as the major source of one-carbon groups required for the biosynthesis of purines, thymidylate, methionine, and other important biomolecules. Also exhibits THF-independent aldolase activity toward beta-hydroxyamino acids, producing glycine and aldehydes, via a retro-aldol mechanism.</text>
</comment>
<comment type="catalytic activity">
    <reaction evidence="1">
        <text>(6R)-5,10-methylene-5,6,7,8-tetrahydrofolate + glycine + H2O = (6S)-5,6,7,8-tetrahydrofolate + L-serine</text>
        <dbReference type="Rhea" id="RHEA:15481"/>
        <dbReference type="ChEBI" id="CHEBI:15377"/>
        <dbReference type="ChEBI" id="CHEBI:15636"/>
        <dbReference type="ChEBI" id="CHEBI:33384"/>
        <dbReference type="ChEBI" id="CHEBI:57305"/>
        <dbReference type="ChEBI" id="CHEBI:57453"/>
        <dbReference type="EC" id="2.1.2.1"/>
    </reaction>
</comment>
<comment type="cofactor">
    <cofactor evidence="1">
        <name>pyridoxal 5'-phosphate</name>
        <dbReference type="ChEBI" id="CHEBI:597326"/>
    </cofactor>
</comment>
<comment type="pathway">
    <text evidence="1">One-carbon metabolism; tetrahydrofolate interconversion.</text>
</comment>
<comment type="pathway">
    <text evidence="1">Amino-acid biosynthesis; glycine biosynthesis; glycine from L-serine: step 1/1.</text>
</comment>
<comment type="subunit">
    <text evidence="1">Homodimer.</text>
</comment>
<comment type="subcellular location">
    <subcellularLocation>
        <location evidence="1">Cytoplasm</location>
    </subcellularLocation>
</comment>
<comment type="similarity">
    <text evidence="1">Belongs to the SHMT family.</text>
</comment>
<protein>
    <recommendedName>
        <fullName evidence="1">Serine hydroxymethyltransferase</fullName>
        <shortName evidence="1">SHMT</shortName>
        <shortName evidence="1">Serine methylase</shortName>
        <ecNumber evidence="1">2.1.2.1</ecNumber>
    </recommendedName>
</protein>
<keyword id="KW-0007">Acetylation</keyword>
<keyword id="KW-0028">Amino-acid biosynthesis</keyword>
<keyword id="KW-0963">Cytoplasm</keyword>
<keyword id="KW-0554">One-carbon metabolism</keyword>
<keyword id="KW-0663">Pyridoxal phosphate</keyword>
<keyword id="KW-0808">Transferase</keyword>
<gene>
    <name evidence="1" type="primary">glyA</name>
    <name type="ordered locus">EcHS_A2704</name>
</gene>
<proteinExistence type="inferred from homology"/>
<feature type="chain" id="PRO_1000057366" description="Serine hydroxymethyltransferase">
    <location>
        <begin position="1"/>
        <end position="417"/>
    </location>
</feature>
<feature type="binding site" evidence="1">
    <location>
        <position position="121"/>
    </location>
    <ligand>
        <name>(6S)-5,6,7,8-tetrahydrofolate</name>
        <dbReference type="ChEBI" id="CHEBI:57453"/>
    </ligand>
</feature>
<feature type="binding site" evidence="1">
    <location>
        <begin position="125"/>
        <end position="127"/>
    </location>
    <ligand>
        <name>(6S)-5,6,7,8-tetrahydrofolate</name>
        <dbReference type="ChEBI" id="CHEBI:57453"/>
    </ligand>
</feature>
<feature type="binding site" evidence="1">
    <location>
        <begin position="355"/>
        <end position="357"/>
    </location>
    <ligand>
        <name>(6S)-5,6,7,8-tetrahydrofolate</name>
        <dbReference type="ChEBI" id="CHEBI:57453"/>
    </ligand>
</feature>
<feature type="site" description="Plays an important role in substrate specificity" evidence="1">
    <location>
        <position position="228"/>
    </location>
</feature>
<feature type="modified residue" description="N6-acetyllysine" evidence="1">
    <location>
        <position position="54"/>
    </location>
</feature>
<feature type="modified residue" description="N6-(pyridoxal phosphate)lysine" evidence="1">
    <location>
        <position position="229"/>
    </location>
</feature>
<feature type="modified residue" description="N6-acetyllysine" evidence="1">
    <location>
        <position position="250"/>
    </location>
</feature>
<feature type="modified residue" description="N6-acetyllysine" evidence="1">
    <location>
        <position position="285"/>
    </location>
</feature>
<feature type="modified residue" description="N6-acetyllysine" evidence="1">
    <location>
        <position position="354"/>
    </location>
</feature>
<feature type="modified residue" description="N6-acetyllysine" evidence="1">
    <location>
        <position position="375"/>
    </location>
</feature>